<reference key="1">
    <citation type="journal article" date="1996" name="J. Bacteriol.">
        <title>Organization of Ureaplasma urealyticum urease gene cluster and expression in a suppressor strain of Escherichia coli.</title>
        <authorList>
            <person name="Neyrolles O."/>
            <person name="Ferris S."/>
            <person name="Behbahani N."/>
            <person name="Montagnier L."/>
            <person name="Blanchard A."/>
        </authorList>
    </citation>
    <scope>NUCLEOTIDE SEQUENCE [GENOMIC DNA]</scope>
    <source>
        <strain>ATCC 27813 / 7 / Serovar 1</strain>
    </source>
</reference>
<reference key="2">
    <citation type="journal article" date="1996" name="J. Bacteriol.">
        <authorList>
            <person name="Neyrolles O."/>
            <person name="Ferris S."/>
            <person name="Behbahani N."/>
            <person name="Montagnier L."/>
            <person name="Blanchard A."/>
        </authorList>
    </citation>
    <scope>ERRATUM OF PUBMED:8550495</scope>
</reference>
<reference key="3">
    <citation type="journal article" date="2000" name="Nature">
        <title>The complete sequence of the mucosal pathogen Ureaplasma urealyticum.</title>
        <authorList>
            <person name="Glass J.I."/>
            <person name="Lefkowitz E.J."/>
            <person name="Glass J.S."/>
            <person name="Heiner C.R."/>
            <person name="Chen E.Y."/>
            <person name="Cassell G.H."/>
        </authorList>
    </citation>
    <scope>NUCLEOTIDE SEQUENCE [LARGE SCALE GENOMIC DNA]</scope>
    <source>
        <strain>ATCC 700970</strain>
    </source>
</reference>
<reference key="4">
    <citation type="submission" date="2000-09" db="EMBL/GenBank/DDBJ databases">
        <title>Phylogenetic study of Ureaplasma parvum and Ureaplasma urealyticum.</title>
        <authorList>
            <person name="Kong F."/>
            <person name="Gilbert G.L."/>
        </authorList>
    </citation>
    <scope>NUCLEOTIDE SEQUENCE [GENOMIC DNA]</scope>
</reference>
<reference key="5">
    <citation type="journal article" date="1999" name="Int. J. Syst. Bacteriol.">
        <title>Phylogenetic analysis of Ureaplasma urealyticum -- support for the establishment of a new species, Ureaplasma parvum.</title>
        <authorList>
            <person name="Kong F."/>
            <person name="James G."/>
            <person name="Ma Z."/>
            <person name="Gordon S."/>
            <person name="Wang B."/>
            <person name="Gilbert G.L."/>
        </authorList>
    </citation>
    <scope>NUCLEOTIDE SEQUENCE [GENOMIC DNA] OF 1-135</scope>
    <source>
        <strain>ATCC 27813 / 7 / Serovar 1</strain>
        <strain>ATCC 27818 / Pi / Serovar 6</strain>
        <strain>ATCC 33697 / U26 / Serovar 14</strain>
    </source>
</reference>
<proteinExistence type="inferred from homology"/>
<evidence type="ECO:0000255" key="1">
    <source>
        <dbReference type="HAMAP-Rule" id="MF_01953"/>
    </source>
</evidence>
<evidence type="ECO:0000305" key="2"/>
<accession>P0C7K7</accession>
<accession>Q60058</accession>
<accession>Q9PQ56</accession>
<accession>Q9R3U4</accession>
<protein>
    <recommendedName>
        <fullName evidence="1">Urease subunit alpha</fullName>
        <ecNumber evidence="1">3.5.1.5</ecNumber>
    </recommendedName>
    <alternativeName>
        <fullName evidence="1">Urea amidohydrolase subunit alpha</fullName>
    </alternativeName>
</protein>
<sequence length="598" mass="64545">MFKISRKNYSDLYGITTGDSVRLGDTNLWVKVEKDLTTYGEESVFGGGKTLREGMGMNSTMKLDDKLGNAEVMDLVITNALIVDYTGIYKADIGIKNGKIAAIGKSGNPHLTDNVDMIVGISTEISAGEGKIYTAGGLDTHVHWLEPEIVPVALDGGITTVIAGGTGMNDGTKATTVSPGKFWVKSALQAADGLSINAGFLAKGQGMEDPIFEQIAAGACGLKIHEDWGATGNAIDLALTVADKTDVAVAIHTDTLNEAGFVEHTIAAMKGRTIHAYHTEGAGGGHAPDILETVKYAHILPASTNPTIPYTVNTIAEHLDMLMVCHHLNPKVPEDVAFADSRIRSQTIAAEDLLHDMGAISIMSSDTLAMGRIGEVATRTWQMAHKMKAQFGSLKGDSEFSDNNRVKRYISKYTINPAIAHGVDSYIGSLEVGKLADIVAWEPKFFGAKPYYVVKMGVIARCVAGDPNASIPTCEPVIMRDQFGTYGRLLTNTSVSFVSKIGLENGIKEEYKLEKELLPVKNCRSVNKKSMKWNSATPNLEVDPQTFDAAVDFNDLENWLEQSASELAKKLKKTSSGKYILDAEPLTEAPLAQRYFLF</sequence>
<dbReference type="EC" id="3.5.1.5" evidence="1"/>
<dbReference type="EMBL" id="L40489">
    <property type="protein sequence ID" value="AAA89189.2"/>
    <property type="molecule type" value="Genomic_DNA"/>
</dbReference>
<dbReference type="EMBL" id="AF222894">
    <property type="protein sequence ID" value="AAF30844.1"/>
    <property type="molecule type" value="Genomic_DNA"/>
</dbReference>
<dbReference type="EMBL" id="AF085730">
    <property type="protein sequence ID" value="AAD28136.2"/>
    <property type="molecule type" value="Genomic_DNA"/>
</dbReference>
<dbReference type="EMBL" id="AF085731">
    <property type="protein sequence ID" value="AAD28139.2"/>
    <property type="molecule type" value="Genomic_DNA"/>
</dbReference>
<dbReference type="EMBL" id="AF085733">
    <property type="protein sequence ID" value="AAD28145.2"/>
    <property type="molecule type" value="Genomic_DNA"/>
</dbReference>
<dbReference type="PIR" id="G82890">
    <property type="entry name" value="G82890"/>
</dbReference>
<dbReference type="RefSeq" id="WP_006688455.1">
    <property type="nucleotide sequence ID" value="NC_002162.1"/>
</dbReference>
<dbReference type="SMR" id="P0C7K7"/>
<dbReference type="STRING" id="273119.UU432"/>
<dbReference type="MEROPS" id="M38.982"/>
<dbReference type="EnsemblBacteria" id="AAF30844">
    <property type="protein sequence ID" value="AAF30844"/>
    <property type="gene ID" value="UU432"/>
</dbReference>
<dbReference type="GeneID" id="29672358"/>
<dbReference type="KEGG" id="uur:UU432"/>
<dbReference type="eggNOG" id="COG0804">
    <property type="taxonomic scope" value="Bacteria"/>
</dbReference>
<dbReference type="HOGENOM" id="CLU_000980_0_0_14"/>
<dbReference type="OrthoDB" id="9802793at2"/>
<dbReference type="UniPathway" id="UPA00258">
    <property type="reaction ID" value="UER00370"/>
</dbReference>
<dbReference type="Proteomes" id="UP000000423">
    <property type="component" value="Chromosome"/>
</dbReference>
<dbReference type="GO" id="GO:0005737">
    <property type="term" value="C:cytoplasm"/>
    <property type="evidence" value="ECO:0007669"/>
    <property type="project" value="UniProtKB-SubCell"/>
</dbReference>
<dbReference type="GO" id="GO:0016151">
    <property type="term" value="F:nickel cation binding"/>
    <property type="evidence" value="ECO:0007669"/>
    <property type="project" value="UniProtKB-UniRule"/>
</dbReference>
<dbReference type="GO" id="GO:0009039">
    <property type="term" value="F:urease activity"/>
    <property type="evidence" value="ECO:0007669"/>
    <property type="project" value="UniProtKB-UniRule"/>
</dbReference>
<dbReference type="GO" id="GO:0043419">
    <property type="term" value="P:urea catabolic process"/>
    <property type="evidence" value="ECO:0007669"/>
    <property type="project" value="UniProtKB-UniRule"/>
</dbReference>
<dbReference type="CDD" id="cd00375">
    <property type="entry name" value="Urease_alpha"/>
    <property type="match status" value="1"/>
</dbReference>
<dbReference type="Gene3D" id="3.20.20.140">
    <property type="entry name" value="Metal-dependent hydrolases"/>
    <property type="match status" value="1"/>
</dbReference>
<dbReference type="Gene3D" id="2.30.40.10">
    <property type="entry name" value="Urease, subunit C, domain 1"/>
    <property type="match status" value="1"/>
</dbReference>
<dbReference type="HAMAP" id="MF_01953">
    <property type="entry name" value="Urease_alpha"/>
    <property type="match status" value="1"/>
</dbReference>
<dbReference type="InterPro" id="IPR006680">
    <property type="entry name" value="Amidohydro-rel"/>
</dbReference>
<dbReference type="InterPro" id="IPR011059">
    <property type="entry name" value="Metal-dep_hydrolase_composite"/>
</dbReference>
<dbReference type="InterPro" id="IPR032466">
    <property type="entry name" value="Metal_Hydrolase"/>
</dbReference>
<dbReference type="InterPro" id="IPR011612">
    <property type="entry name" value="Urease_alpha_N_dom"/>
</dbReference>
<dbReference type="InterPro" id="IPR050112">
    <property type="entry name" value="Urease_alpha_subunit"/>
</dbReference>
<dbReference type="InterPro" id="IPR017950">
    <property type="entry name" value="Urease_AS"/>
</dbReference>
<dbReference type="InterPro" id="IPR005848">
    <property type="entry name" value="Urease_asu"/>
</dbReference>
<dbReference type="InterPro" id="IPR017951">
    <property type="entry name" value="Urease_asu_c"/>
</dbReference>
<dbReference type="InterPro" id="IPR029754">
    <property type="entry name" value="Urease_Ni-bd"/>
</dbReference>
<dbReference type="NCBIfam" id="NF009686">
    <property type="entry name" value="PRK13207.1"/>
    <property type="match status" value="1"/>
</dbReference>
<dbReference type="NCBIfam" id="TIGR01792">
    <property type="entry name" value="urease_alph"/>
    <property type="match status" value="1"/>
</dbReference>
<dbReference type="PANTHER" id="PTHR43440">
    <property type="entry name" value="UREASE"/>
    <property type="match status" value="1"/>
</dbReference>
<dbReference type="PANTHER" id="PTHR43440:SF1">
    <property type="entry name" value="UREASE"/>
    <property type="match status" value="1"/>
</dbReference>
<dbReference type="Pfam" id="PF01979">
    <property type="entry name" value="Amidohydro_1"/>
    <property type="match status" value="1"/>
</dbReference>
<dbReference type="Pfam" id="PF00449">
    <property type="entry name" value="Urease_alpha"/>
    <property type="match status" value="1"/>
</dbReference>
<dbReference type="PRINTS" id="PR01752">
    <property type="entry name" value="UREASE"/>
</dbReference>
<dbReference type="SUPFAM" id="SSF51338">
    <property type="entry name" value="Composite domain of metallo-dependent hydrolases"/>
    <property type="match status" value="1"/>
</dbReference>
<dbReference type="SUPFAM" id="SSF51556">
    <property type="entry name" value="Metallo-dependent hydrolases"/>
    <property type="match status" value="1"/>
</dbReference>
<dbReference type="PROSITE" id="PS01120">
    <property type="entry name" value="UREASE_1"/>
    <property type="match status" value="1"/>
</dbReference>
<dbReference type="PROSITE" id="PS00145">
    <property type="entry name" value="UREASE_2"/>
    <property type="match status" value="1"/>
</dbReference>
<dbReference type="PROSITE" id="PS51368">
    <property type="entry name" value="UREASE_3"/>
    <property type="match status" value="1"/>
</dbReference>
<keyword id="KW-0963">Cytoplasm</keyword>
<keyword id="KW-0378">Hydrolase</keyword>
<keyword id="KW-0479">Metal-binding</keyword>
<keyword id="KW-0533">Nickel</keyword>
<keyword id="KW-1185">Reference proteome</keyword>
<comment type="catalytic activity">
    <reaction evidence="1">
        <text>urea + 2 H2O + H(+) = hydrogencarbonate + 2 NH4(+)</text>
        <dbReference type="Rhea" id="RHEA:20557"/>
        <dbReference type="ChEBI" id="CHEBI:15377"/>
        <dbReference type="ChEBI" id="CHEBI:15378"/>
        <dbReference type="ChEBI" id="CHEBI:16199"/>
        <dbReference type="ChEBI" id="CHEBI:17544"/>
        <dbReference type="ChEBI" id="CHEBI:28938"/>
        <dbReference type="EC" id="3.5.1.5"/>
    </reaction>
</comment>
<comment type="cofactor">
    <cofactor evidence="1">
        <name>Ni cation</name>
        <dbReference type="ChEBI" id="CHEBI:25516"/>
    </cofactor>
    <text evidence="1">Binds 2 nickel ions per subunit.</text>
</comment>
<comment type="pathway">
    <text evidence="1">Nitrogen metabolism; urea degradation; CO(2) and NH(3) from urea (urease route): step 1/1.</text>
</comment>
<comment type="subunit">
    <text evidence="1">Heterotrimer of UreA (gamma), UreB (beta) and UreC (alpha) subunits. Three heterotrimers associate to form the active enzyme.</text>
</comment>
<comment type="subcellular location">
    <subcellularLocation>
        <location evidence="1">Cytoplasm</location>
    </subcellularLocation>
</comment>
<comment type="PTM">
    <text evidence="1">Carboxylation allows a single lysine to coordinate two nickel ions.</text>
</comment>
<comment type="similarity">
    <text evidence="1">Belongs to the metallo-dependent hydrolases superfamily. Urease alpha subunit family.</text>
</comment>
<feature type="chain" id="PRO_0000067563" description="Urease subunit alpha">
    <location>
        <begin position="1"/>
        <end position="598"/>
    </location>
</feature>
<feature type="active site" description="Proton donor" evidence="1">
    <location>
        <position position="326"/>
    </location>
</feature>
<feature type="binding site" evidence="1">
    <location>
        <position position="141"/>
    </location>
    <ligand>
        <name>Ni(2+)</name>
        <dbReference type="ChEBI" id="CHEBI:49786"/>
        <label>1</label>
    </ligand>
</feature>
<feature type="binding site" evidence="1">
    <location>
        <position position="143"/>
    </location>
    <ligand>
        <name>Ni(2+)</name>
        <dbReference type="ChEBI" id="CHEBI:49786"/>
        <label>1</label>
    </ligand>
</feature>
<feature type="binding site" description="via carbamate group" evidence="1">
    <location>
        <position position="223"/>
    </location>
    <ligand>
        <name>Ni(2+)</name>
        <dbReference type="ChEBI" id="CHEBI:49786"/>
        <label>1</label>
    </ligand>
</feature>
<feature type="binding site" description="via carbamate group" evidence="1">
    <location>
        <position position="223"/>
    </location>
    <ligand>
        <name>Ni(2+)</name>
        <dbReference type="ChEBI" id="CHEBI:49786"/>
        <label>2</label>
    </ligand>
</feature>
<feature type="binding site" evidence="1">
    <location>
        <position position="225"/>
    </location>
    <ligand>
        <name>substrate</name>
    </ligand>
</feature>
<feature type="binding site" evidence="1">
    <location>
        <position position="252"/>
    </location>
    <ligand>
        <name>Ni(2+)</name>
        <dbReference type="ChEBI" id="CHEBI:49786"/>
        <label>2</label>
    </ligand>
</feature>
<feature type="binding site" evidence="1">
    <location>
        <position position="278"/>
    </location>
    <ligand>
        <name>Ni(2+)</name>
        <dbReference type="ChEBI" id="CHEBI:49786"/>
        <label>2</label>
    </ligand>
</feature>
<feature type="binding site" evidence="1">
    <location>
        <position position="366"/>
    </location>
    <ligand>
        <name>Ni(2+)</name>
        <dbReference type="ChEBI" id="CHEBI:49786"/>
        <label>1</label>
    </ligand>
</feature>
<feature type="modified residue" description="N6-carboxylysine" evidence="1">
    <location>
        <position position="223"/>
    </location>
</feature>
<feature type="sequence conflict" description="In Ref. 1; AAA89189." evidence="2" ref="1">
    <original>I</original>
    <variation>L</variation>
    <location>
        <position position="100"/>
    </location>
</feature>
<feature type="sequence conflict" description="In Ref. 4; AAD28136/AAD28139." evidence="2" ref="4">
    <original>K</original>
    <variation>N</variation>
    <location>
        <position position="244"/>
    </location>
</feature>
<feature type="sequence conflict" description="In Ref. 1; AAA89189." evidence="2" ref="1">
    <original>H</original>
    <variation>A</variation>
    <location>
        <position position="355"/>
    </location>
</feature>
<gene>
    <name evidence="1" type="primary">ureC</name>
    <name type="ordered locus">UU432</name>
</gene>
<organism>
    <name type="scientific">Ureaplasma parvum serovar 3 (strain ATCC 700970)</name>
    <dbReference type="NCBI Taxonomy" id="273119"/>
    <lineage>
        <taxon>Bacteria</taxon>
        <taxon>Bacillati</taxon>
        <taxon>Mycoplasmatota</taxon>
        <taxon>Mycoplasmoidales</taxon>
        <taxon>Mycoplasmoidaceae</taxon>
        <taxon>Ureaplasma</taxon>
    </lineage>
</organism>
<name>URE1_UREPA</name>